<feature type="chain" id="PRO_0000166232" description="Glycine cleavage system H protein">
    <location>
        <begin position="1"/>
        <end position="126"/>
    </location>
</feature>
<feature type="domain" description="Lipoyl-binding" evidence="2">
    <location>
        <begin position="22"/>
        <end position="104"/>
    </location>
</feature>
<feature type="modified residue" description="N6-lipoyllysine" evidence="1">
    <location>
        <position position="63"/>
    </location>
</feature>
<reference key="1">
    <citation type="journal article" date="2002" name="Nucleic Acids Res.">
        <title>Genome sequence of Oceanobacillus iheyensis isolated from the Iheya Ridge and its unexpected adaptive capabilities to extreme environments.</title>
        <authorList>
            <person name="Takami H."/>
            <person name="Takaki Y."/>
            <person name="Uchiyama I."/>
        </authorList>
    </citation>
    <scope>NUCLEOTIDE SEQUENCE [LARGE SCALE GENOMIC DNA]</scope>
    <source>
        <strain>DSM 14371 / CIP 107618 / JCM 11309 / KCTC 3954 / HTE831</strain>
    </source>
</reference>
<organism>
    <name type="scientific">Oceanobacillus iheyensis (strain DSM 14371 / CIP 107618 / JCM 11309 / KCTC 3954 / HTE831)</name>
    <dbReference type="NCBI Taxonomy" id="221109"/>
    <lineage>
        <taxon>Bacteria</taxon>
        <taxon>Bacillati</taxon>
        <taxon>Bacillota</taxon>
        <taxon>Bacilli</taxon>
        <taxon>Bacillales</taxon>
        <taxon>Bacillaceae</taxon>
        <taxon>Oceanobacillus</taxon>
    </lineage>
</organism>
<protein>
    <recommendedName>
        <fullName evidence="1">Glycine cleavage system H protein</fullName>
    </recommendedName>
    <alternativeName>
        <fullName evidence="1">Octanoyl/lipoyl carrier protein</fullName>
    </alternativeName>
</protein>
<accession>Q8ENT9</accession>
<proteinExistence type="inferred from homology"/>
<evidence type="ECO:0000255" key="1">
    <source>
        <dbReference type="HAMAP-Rule" id="MF_00272"/>
    </source>
</evidence>
<evidence type="ECO:0000255" key="2">
    <source>
        <dbReference type="PROSITE-ProRule" id="PRU01066"/>
    </source>
</evidence>
<name>GCSH_OCEIH</name>
<gene>
    <name evidence="1" type="primary">gcvH</name>
    <name type="ordered locus">OB2388</name>
</gene>
<sequence length="126" mass="14356">MSLPQDLLYSKEHEWVKQEDGKLRIGITDFAQDELGDIVFVELPEIGEELKVDDPFGSVESVKTVSELYAPVSGKVVEINDDLEDSPEYVNESPYEKAWMIVIEPSDEKELEELLSAENYEAFIQD</sequence>
<keyword id="KW-0450">Lipoyl</keyword>
<keyword id="KW-1185">Reference proteome</keyword>
<comment type="function">
    <text evidence="1">The glycine cleavage system catalyzes the degradation of glycine. The H protein shuttles the methylamine group of glycine from the P protein to the T protein.</text>
</comment>
<comment type="function">
    <text evidence="1">Is also involved in protein lipoylation via its role as an octanoyl/lipoyl carrier protein intermediate.</text>
</comment>
<comment type="cofactor">
    <cofactor evidence="1">
        <name>(R)-lipoate</name>
        <dbReference type="ChEBI" id="CHEBI:83088"/>
    </cofactor>
    <text evidence="1">Binds 1 lipoyl cofactor covalently.</text>
</comment>
<comment type="subunit">
    <text evidence="1">The glycine cleavage system is composed of four proteins: P, T, L and H.</text>
</comment>
<comment type="similarity">
    <text evidence="1">Belongs to the GcvH family.</text>
</comment>
<dbReference type="EMBL" id="BA000028">
    <property type="protein sequence ID" value="BAC14344.1"/>
    <property type="molecule type" value="Genomic_DNA"/>
</dbReference>
<dbReference type="RefSeq" id="WP_011066779.1">
    <property type="nucleotide sequence ID" value="NC_004193.1"/>
</dbReference>
<dbReference type="SMR" id="Q8ENT9"/>
<dbReference type="STRING" id="221109.gene:10734639"/>
<dbReference type="KEGG" id="oih:OB2388"/>
<dbReference type="eggNOG" id="COG0509">
    <property type="taxonomic scope" value="Bacteria"/>
</dbReference>
<dbReference type="HOGENOM" id="CLU_097408_2_2_9"/>
<dbReference type="OrthoDB" id="9796712at2"/>
<dbReference type="PhylomeDB" id="Q8ENT9"/>
<dbReference type="Proteomes" id="UP000000822">
    <property type="component" value="Chromosome"/>
</dbReference>
<dbReference type="GO" id="GO:0005829">
    <property type="term" value="C:cytosol"/>
    <property type="evidence" value="ECO:0007669"/>
    <property type="project" value="TreeGrafter"/>
</dbReference>
<dbReference type="GO" id="GO:0005960">
    <property type="term" value="C:glycine cleavage complex"/>
    <property type="evidence" value="ECO:0007669"/>
    <property type="project" value="InterPro"/>
</dbReference>
<dbReference type="GO" id="GO:0019464">
    <property type="term" value="P:glycine decarboxylation via glycine cleavage system"/>
    <property type="evidence" value="ECO:0007669"/>
    <property type="project" value="UniProtKB-UniRule"/>
</dbReference>
<dbReference type="CDD" id="cd06848">
    <property type="entry name" value="GCS_H"/>
    <property type="match status" value="1"/>
</dbReference>
<dbReference type="Gene3D" id="2.40.50.100">
    <property type="match status" value="1"/>
</dbReference>
<dbReference type="HAMAP" id="MF_00272">
    <property type="entry name" value="GcvH"/>
    <property type="match status" value="1"/>
</dbReference>
<dbReference type="InterPro" id="IPR003016">
    <property type="entry name" value="2-oxoA_DH_lipoyl-BS"/>
</dbReference>
<dbReference type="InterPro" id="IPR000089">
    <property type="entry name" value="Biotin_lipoyl"/>
</dbReference>
<dbReference type="InterPro" id="IPR002930">
    <property type="entry name" value="GCV_H"/>
</dbReference>
<dbReference type="InterPro" id="IPR033753">
    <property type="entry name" value="GCV_H/Fam206"/>
</dbReference>
<dbReference type="InterPro" id="IPR017453">
    <property type="entry name" value="GCV_H_sub"/>
</dbReference>
<dbReference type="InterPro" id="IPR011053">
    <property type="entry name" value="Single_hybrid_motif"/>
</dbReference>
<dbReference type="NCBIfam" id="TIGR00527">
    <property type="entry name" value="gcvH"/>
    <property type="match status" value="1"/>
</dbReference>
<dbReference type="NCBIfam" id="NF002270">
    <property type="entry name" value="PRK01202.1"/>
    <property type="match status" value="1"/>
</dbReference>
<dbReference type="PANTHER" id="PTHR11715">
    <property type="entry name" value="GLYCINE CLEAVAGE SYSTEM H PROTEIN"/>
    <property type="match status" value="1"/>
</dbReference>
<dbReference type="PANTHER" id="PTHR11715:SF3">
    <property type="entry name" value="GLYCINE CLEAVAGE SYSTEM H PROTEIN-RELATED"/>
    <property type="match status" value="1"/>
</dbReference>
<dbReference type="Pfam" id="PF01597">
    <property type="entry name" value="GCV_H"/>
    <property type="match status" value="1"/>
</dbReference>
<dbReference type="SUPFAM" id="SSF51230">
    <property type="entry name" value="Single hybrid motif"/>
    <property type="match status" value="1"/>
</dbReference>
<dbReference type="PROSITE" id="PS50968">
    <property type="entry name" value="BIOTINYL_LIPOYL"/>
    <property type="match status" value="1"/>
</dbReference>
<dbReference type="PROSITE" id="PS00189">
    <property type="entry name" value="LIPOYL"/>
    <property type="match status" value="1"/>
</dbReference>